<reference key="1">
    <citation type="journal article" date="2006" name="Proc. Natl. Acad. Sci. U.S.A.">
        <title>Comparative genomics of the lactic acid bacteria.</title>
        <authorList>
            <person name="Makarova K.S."/>
            <person name="Slesarev A."/>
            <person name="Wolf Y.I."/>
            <person name="Sorokin A."/>
            <person name="Mirkin B."/>
            <person name="Koonin E.V."/>
            <person name="Pavlov A."/>
            <person name="Pavlova N."/>
            <person name="Karamychev V."/>
            <person name="Polouchine N."/>
            <person name="Shakhova V."/>
            <person name="Grigoriev I."/>
            <person name="Lou Y."/>
            <person name="Rohksar D."/>
            <person name="Lucas S."/>
            <person name="Huang K."/>
            <person name="Goodstein D.M."/>
            <person name="Hawkins T."/>
            <person name="Plengvidhya V."/>
            <person name="Welker D."/>
            <person name="Hughes J."/>
            <person name="Goh Y."/>
            <person name="Benson A."/>
            <person name="Baldwin K."/>
            <person name="Lee J.-H."/>
            <person name="Diaz-Muniz I."/>
            <person name="Dosti B."/>
            <person name="Smeianov V."/>
            <person name="Wechter W."/>
            <person name="Barabote R."/>
            <person name="Lorca G."/>
            <person name="Altermann E."/>
            <person name="Barrangou R."/>
            <person name="Ganesan B."/>
            <person name="Xie Y."/>
            <person name="Rawsthorne H."/>
            <person name="Tamir D."/>
            <person name="Parker C."/>
            <person name="Breidt F."/>
            <person name="Broadbent J.R."/>
            <person name="Hutkins R."/>
            <person name="O'Sullivan D."/>
            <person name="Steele J."/>
            <person name="Unlu G."/>
            <person name="Saier M.H. Jr."/>
            <person name="Klaenhammer T."/>
            <person name="Richardson P."/>
            <person name="Kozyavkin S."/>
            <person name="Weimer B.C."/>
            <person name="Mills D.A."/>
        </authorList>
    </citation>
    <scope>NUCLEOTIDE SEQUENCE [LARGE SCALE GENOMIC DNA]</scope>
    <source>
        <strain>SK11</strain>
    </source>
</reference>
<dbReference type="EMBL" id="CP000425">
    <property type="protein sequence ID" value="ABJ72800.1"/>
    <property type="molecule type" value="Genomic_DNA"/>
</dbReference>
<dbReference type="RefSeq" id="WP_011676271.1">
    <property type="nucleotide sequence ID" value="NC_008527.1"/>
</dbReference>
<dbReference type="SMR" id="Q02Z22"/>
<dbReference type="KEGG" id="llc:LACR_1272"/>
<dbReference type="HOGENOM" id="CLU_014218_8_2_9"/>
<dbReference type="Proteomes" id="UP000000240">
    <property type="component" value="Chromosome"/>
</dbReference>
<dbReference type="GO" id="GO:0009376">
    <property type="term" value="C:HslUV protease complex"/>
    <property type="evidence" value="ECO:0007669"/>
    <property type="project" value="TreeGrafter"/>
</dbReference>
<dbReference type="GO" id="GO:0005524">
    <property type="term" value="F:ATP binding"/>
    <property type="evidence" value="ECO:0007669"/>
    <property type="project" value="UniProtKB-UniRule"/>
</dbReference>
<dbReference type="GO" id="GO:0016887">
    <property type="term" value="F:ATP hydrolysis activity"/>
    <property type="evidence" value="ECO:0007669"/>
    <property type="project" value="InterPro"/>
</dbReference>
<dbReference type="GO" id="GO:0140662">
    <property type="term" value="F:ATP-dependent protein folding chaperone"/>
    <property type="evidence" value="ECO:0007669"/>
    <property type="project" value="InterPro"/>
</dbReference>
<dbReference type="GO" id="GO:0046983">
    <property type="term" value="F:protein dimerization activity"/>
    <property type="evidence" value="ECO:0007669"/>
    <property type="project" value="InterPro"/>
</dbReference>
<dbReference type="GO" id="GO:0051082">
    <property type="term" value="F:unfolded protein binding"/>
    <property type="evidence" value="ECO:0007669"/>
    <property type="project" value="UniProtKB-UniRule"/>
</dbReference>
<dbReference type="GO" id="GO:0008270">
    <property type="term" value="F:zinc ion binding"/>
    <property type="evidence" value="ECO:0007669"/>
    <property type="project" value="InterPro"/>
</dbReference>
<dbReference type="GO" id="GO:0051301">
    <property type="term" value="P:cell division"/>
    <property type="evidence" value="ECO:0007669"/>
    <property type="project" value="TreeGrafter"/>
</dbReference>
<dbReference type="GO" id="GO:0051603">
    <property type="term" value="P:proteolysis involved in protein catabolic process"/>
    <property type="evidence" value="ECO:0007669"/>
    <property type="project" value="TreeGrafter"/>
</dbReference>
<dbReference type="CDD" id="cd19497">
    <property type="entry name" value="RecA-like_ClpX"/>
    <property type="match status" value="1"/>
</dbReference>
<dbReference type="FunFam" id="1.10.8.60:FF:000002">
    <property type="entry name" value="ATP-dependent Clp protease ATP-binding subunit ClpX"/>
    <property type="match status" value="1"/>
</dbReference>
<dbReference type="FunFam" id="3.40.50.300:FF:000005">
    <property type="entry name" value="ATP-dependent Clp protease ATP-binding subunit ClpX"/>
    <property type="match status" value="1"/>
</dbReference>
<dbReference type="Gene3D" id="1.10.8.60">
    <property type="match status" value="1"/>
</dbReference>
<dbReference type="Gene3D" id="6.20.220.10">
    <property type="entry name" value="ClpX chaperone, C4-type zinc finger domain"/>
    <property type="match status" value="1"/>
</dbReference>
<dbReference type="Gene3D" id="3.40.50.300">
    <property type="entry name" value="P-loop containing nucleotide triphosphate hydrolases"/>
    <property type="match status" value="1"/>
</dbReference>
<dbReference type="HAMAP" id="MF_00175">
    <property type="entry name" value="ClpX"/>
    <property type="match status" value="1"/>
</dbReference>
<dbReference type="InterPro" id="IPR003593">
    <property type="entry name" value="AAA+_ATPase"/>
</dbReference>
<dbReference type="InterPro" id="IPR050052">
    <property type="entry name" value="ATP-dep_Clp_protease_ClpX"/>
</dbReference>
<dbReference type="InterPro" id="IPR003959">
    <property type="entry name" value="ATPase_AAA_core"/>
</dbReference>
<dbReference type="InterPro" id="IPR019489">
    <property type="entry name" value="Clp_ATPase_C"/>
</dbReference>
<dbReference type="InterPro" id="IPR004487">
    <property type="entry name" value="Clp_protease_ATP-bd_su_ClpX"/>
</dbReference>
<dbReference type="InterPro" id="IPR046425">
    <property type="entry name" value="ClpX_bact"/>
</dbReference>
<dbReference type="InterPro" id="IPR027417">
    <property type="entry name" value="P-loop_NTPase"/>
</dbReference>
<dbReference type="InterPro" id="IPR010603">
    <property type="entry name" value="Znf_CppX_C4"/>
</dbReference>
<dbReference type="InterPro" id="IPR038366">
    <property type="entry name" value="Znf_CppX_C4_sf"/>
</dbReference>
<dbReference type="NCBIfam" id="TIGR00382">
    <property type="entry name" value="clpX"/>
    <property type="match status" value="1"/>
</dbReference>
<dbReference type="NCBIfam" id="NF003745">
    <property type="entry name" value="PRK05342.1"/>
    <property type="match status" value="1"/>
</dbReference>
<dbReference type="PANTHER" id="PTHR48102:SF7">
    <property type="entry name" value="ATP-DEPENDENT CLP PROTEASE ATP-BINDING SUBUNIT CLPX-LIKE, MITOCHONDRIAL"/>
    <property type="match status" value="1"/>
</dbReference>
<dbReference type="PANTHER" id="PTHR48102">
    <property type="entry name" value="ATP-DEPENDENT CLP PROTEASE ATP-BINDING SUBUNIT CLPX-LIKE, MITOCHONDRIAL-RELATED"/>
    <property type="match status" value="1"/>
</dbReference>
<dbReference type="Pfam" id="PF07724">
    <property type="entry name" value="AAA_2"/>
    <property type="match status" value="1"/>
</dbReference>
<dbReference type="Pfam" id="PF10431">
    <property type="entry name" value="ClpB_D2-small"/>
    <property type="match status" value="1"/>
</dbReference>
<dbReference type="Pfam" id="PF06689">
    <property type="entry name" value="zf-C4_ClpX"/>
    <property type="match status" value="1"/>
</dbReference>
<dbReference type="SMART" id="SM00382">
    <property type="entry name" value="AAA"/>
    <property type="match status" value="1"/>
</dbReference>
<dbReference type="SMART" id="SM01086">
    <property type="entry name" value="ClpB_D2-small"/>
    <property type="match status" value="1"/>
</dbReference>
<dbReference type="SMART" id="SM00994">
    <property type="entry name" value="zf-C4_ClpX"/>
    <property type="match status" value="1"/>
</dbReference>
<dbReference type="SUPFAM" id="SSF57716">
    <property type="entry name" value="Glucocorticoid receptor-like (DNA-binding domain)"/>
    <property type="match status" value="1"/>
</dbReference>
<dbReference type="SUPFAM" id="SSF52540">
    <property type="entry name" value="P-loop containing nucleoside triphosphate hydrolases"/>
    <property type="match status" value="1"/>
</dbReference>
<dbReference type="PROSITE" id="PS51902">
    <property type="entry name" value="CLPX_ZB"/>
    <property type="match status" value="1"/>
</dbReference>
<name>CLPX_LACLS</name>
<protein>
    <recommendedName>
        <fullName evidence="1">ATP-dependent Clp protease ATP-binding subunit ClpX</fullName>
    </recommendedName>
</protein>
<evidence type="ECO:0000255" key="1">
    <source>
        <dbReference type="HAMAP-Rule" id="MF_00175"/>
    </source>
</evidence>
<evidence type="ECO:0000255" key="2">
    <source>
        <dbReference type="PROSITE-ProRule" id="PRU01250"/>
    </source>
</evidence>
<accession>Q02Z22</accession>
<comment type="function">
    <text evidence="1">ATP-dependent specificity component of the Clp protease. It directs the protease to specific substrates. Can perform chaperone functions in the absence of ClpP.</text>
</comment>
<comment type="subunit">
    <text evidence="1">Component of the ClpX-ClpP complex. Forms a hexameric ring that, in the presence of ATP, binds to fourteen ClpP subunits assembled into a disk-like structure with a central cavity, resembling the structure of eukaryotic proteasomes.</text>
</comment>
<comment type="similarity">
    <text evidence="1">Belongs to the ClpX chaperone family.</text>
</comment>
<sequence>MSNTQNPNIHCSFCGKSQDDVKKMIAGSDVYICNECIELSTRILEEELKEEQDSEMLEVKTPKEMFDHLNEYVIGQEKAKRALAVAVYNHYKRINFTASKIAEDIELQKSNILLIGPTGSGKTFLAQTLAKSLNVPFAIADATSLTEAGYVGEDVENILLKLLQASDFNIERAEHGIIYIDEIDKIAKKSENVSITRDVSGEGVQQALLKIIEGTVASVPPQGGRKHPNQEMIQIDTKNILFIVGGAFDGIEEIVKQRLGEKIIGFGANNKKLSDEDSYMQEIIAEDIQKFGLIPEFIGRLPIVAALERLTEEDLIQILTEPKNALIKQYKQLLLFDNVELEFKDGALMAIAKKAIERKTGARGLRSIIEEVMMDIMFEVPSHEEITKVIITEAVIDGKAEPEMIREADKK</sequence>
<keyword id="KW-0067">ATP-binding</keyword>
<keyword id="KW-0143">Chaperone</keyword>
<keyword id="KW-0479">Metal-binding</keyword>
<keyword id="KW-0547">Nucleotide-binding</keyword>
<keyword id="KW-0862">Zinc</keyword>
<feature type="chain" id="PRO_1000024572" description="ATP-dependent Clp protease ATP-binding subunit ClpX">
    <location>
        <begin position="1"/>
        <end position="411"/>
    </location>
</feature>
<feature type="domain" description="ClpX-type ZB" evidence="2">
    <location>
        <begin position="1"/>
        <end position="52"/>
    </location>
</feature>
<feature type="binding site" evidence="2">
    <location>
        <position position="11"/>
    </location>
    <ligand>
        <name>Zn(2+)</name>
        <dbReference type="ChEBI" id="CHEBI:29105"/>
    </ligand>
</feature>
<feature type="binding site" evidence="2">
    <location>
        <position position="14"/>
    </location>
    <ligand>
        <name>Zn(2+)</name>
        <dbReference type="ChEBI" id="CHEBI:29105"/>
    </ligand>
</feature>
<feature type="binding site" evidence="2">
    <location>
        <position position="33"/>
    </location>
    <ligand>
        <name>Zn(2+)</name>
        <dbReference type="ChEBI" id="CHEBI:29105"/>
    </ligand>
</feature>
<feature type="binding site" evidence="2">
    <location>
        <position position="36"/>
    </location>
    <ligand>
        <name>Zn(2+)</name>
        <dbReference type="ChEBI" id="CHEBI:29105"/>
    </ligand>
</feature>
<feature type="binding site" evidence="1">
    <location>
        <begin position="117"/>
        <end position="124"/>
    </location>
    <ligand>
        <name>ATP</name>
        <dbReference type="ChEBI" id="CHEBI:30616"/>
    </ligand>
</feature>
<organism>
    <name type="scientific">Lactococcus lactis subsp. cremoris (strain SK11)</name>
    <dbReference type="NCBI Taxonomy" id="272622"/>
    <lineage>
        <taxon>Bacteria</taxon>
        <taxon>Bacillati</taxon>
        <taxon>Bacillota</taxon>
        <taxon>Bacilli</taxon>
        <taxon>Lactobacillales</taxon>
        <taxon>Streptococcaceae</taxon>
        <taxon>Lactococcus</taxon>
        <taxon>Lactococcus cremoris subsp. cremoris</taxon>
    </lineage>
</organism>
<gene>
    <name evidence="1" type="primary">clpX</name>
    <name type="ordered locus">LACR_1272</name>
</gene>
<proteinExistence type="inferred from homology"/>